<accession>A9IQI5</accession>
<reference key="1">
    <citation type="journal article" date="2007" name="Nat. Genet.">
        <title>Genomic analysis of Bartonella identifies type IV secretion systems as host adaptability factors.</title>
        <authorList>
            <person name="Saenz H.L."/>
            <person name="Engel P."/>
            <person name="Stoeckli M.C."/>
            <person name="Lanz C."/>
            <person name="Raddatz G."/>
            <person name="Vayssier-Taussat M."/>
            <person name="Birtles R."/>
            <person name="Schuster S.C."/>
            <person name="Dehio C."/>
        </authorList>
    </citation>
    <scope>NUCLEOTIDE SEQUENCE [LARGE SCALE GENOMIC DNA]</scope>
    <source>
        <strain>CIP 105476 / IBS 506</strain>
    </source>
</reference>
<keyword id="KW-0066">ATP synthesis</keyword>
<keyword id="KW-0997">Cell inner membrane</keyword>
<keyword id="KW-1003">Cell membrane</keyword>
<keyword id="KW-0138">CF(0)</keyword>
<keyword id="KW-0375">Hydrogen ion transport</keyword>
<keyword id="KW-0406">Ion transport</keyword>
<keyword id="KW-0472">Membrane</keyword>
<keyword id="KW-0812">Transmembrane</keyword>
<keyword id="KW-1133">Transmembrane helix</keyword>
<keyword id="KW-0813">Transport</keyword>
<gene>
    <name evidence="1" type="primary">atpF1</name>
    <name type="ordered locus">BT_0624</name>
</gene>
<sequence>MFIASAYAQNTETSIEHIKKVAEHANRVFPPFDFVHFSSHFFWLAISFGFFYLFISRVIAPRIGGVIETRRDRIASDLDQAMRMKQEADTVVETYERELAEARLKAHTIAQAAGEELKQKAELERKEIEERLEKKLADAEKQIAKIRDKAMQNVGSIAEEVTLGIVKKLIDVDINKETVRSVIKTANY</sequence>
<comment type="function">
    <text evidence="1">F(1)F(0) ATP synthase produces ATP from ADP in the presence of a proton or sodium gradient. F-type ATPases consist of two structural domains, F(1) containing the extramembraneous catalytic core and F(0) containing the membrane proton channel, linked together by a central stalk and a peripheral stalk. During catalysis, ATP synthesis in the catalytic domain of F(1) is coupled via a rotary mechanism of the central stalk subunits to proton translocation.</text>
</comment>
<comment type="function">
    <text evidence="1">Component of the F(0) channel, it forms part of the peripheral stalk, linking F(1) to F(0).</text>
</comment>
<comment type="subunit">
    <text evidence="1">F-type ATPases have 2 components, F(1) - the catalytic core - and F(0) - the membrane proton channel. F(1) has five subunits: alpha(3), beta(3), gamma(1), delta(1), epsilon(1). F(0) has three main subunits: a(1), b(2) and c(10-14). The alpha and beta chains form an alternating ring which encloses part of the gamma chain. F(1) is attached to F(0) by a central stalk formed by the gamma and epsilon chains, while a peripheral stalk is formed by the delta and b chains.</text>
</comment>
<comment type="subcellular location">
    <subcellularLocation>
        <location evidence="1">Cell inner membrane</location>
        <topology evidence="1">Single-pass membrane protein</topology>
    </subcellularLocation>
</comment>
<comment type="similarity">
    <text evidence="1">Belongs to the ATPase B chain family.</text>
</comment>
<protein>
    <recommendedName>
        <fullName evidence="1">ATP synthase subunit b 1</fullName>
    </recommendedName>
    <alternativeName>
        <fullName evidence="1">ATP synthase F(0) sector subunit b 1</fullName>
    </alternativeName>
    <alternativeName>
        <fullName evidence="1">ATPase subunit I 1</fullName>
    </alternativeName>
    <alternativeName>
        <fullName evidence="1">F-type ATPase subunit b 1</fullName>
        <shortName evidence="1">F-ATPase subunit b 1</shortName>
    </alternativeName>
</protein>
<feature type="chain" id="PRO_0000368346" description="ATP synthase subunit b 1">
    <location>
        <begin position="1"/>
        <end position="188"/>
    </location>
</feature>
<feature type="transmembrane region" description="Helical" evidence="1">
    <location>
        <begin position="35"/>
        <end position="55"/>
    </location>
</feature>
<evidence type="ECO:0000255" key="1">
    <source>
        <dbReference type="HAMAP-Rule" id="MF_01398"/>
    </source>
</evidence>
<dbReference type="EMBL" id="AM260525">
    <property type="protein sequence ID" value="CAK01062.1"/>
    <property type="molecule type" value="Genomic_DNA"/>
</dbReference>
<dbReference type="RefSeq" id="WP_012231168.1">
    <property type="nucleotide sequence ID" value="NC_010161.1"/>
</dbReference>
<dbReference type="SMR" id="A9IQI5"/>
<dbReference type="KEGG" id="btr:BT_0624"/>
<dbReference type="eggNOG" id="COG0711">
    <property type="taxonomic scope" value="Bacteria"/>
</dbReference>
<dbReference type="HOGENOM" id="CLU_079215_1_2_5"/>
<dbReference type="Proteomes" id="UP000001592">
    <property type="component" value="Chromosome"/>
</dbReference>
<dbReference type="GO" id="GO:0005886">
    <property type="term" value="C:plasma membrane"/>
    <property type="evidence" value="ECO:0007669"/>
    <property type="project" value="UniProtKB-SubCell"/>
</dbReference>
<dbReference type="GO" id="GO:0045259">
    <property type="term" value="C:proton-transporting ATP synthase complex"/>
    <property type="evidence" value="ECO:0007669"/>
    <property type="project" value="UniProtKB-KW"/>
</dbReference>
<dbReference type="GO" id="GO:0046933">
    <property type="term" value="F:proton-transporting ATP synthase activity, rotational mechanism"/>
    <property type="evidence" value="ECO:0007669"/>
    <property type="project" value="UniProtKB-UniRule"/>
</dbReference>
<dbReference type="GO" id="GO:0046961">
    <property type="term" value="F:proton-transporting ATPase activity, rotational mechanism"/>
    <property type="evidence" value="ECO:0007669"/>
    <property type="project" value="TreeGrafter"/>
</dbReference>
<dbReference type="CDD" id="cd06503">
    <property type="entry name" value="ATP-synt_Fo_b"/>
    <property type="match status" value="1"/>
</dbReference>
<dbReference type="Gene3D" id="6.10.250.1580">
    <property type="match status" value="1"/>
</dbReference>
<dbReference type="HAMAP" id="MF_01398">
    <property type="entry name" value="ATP_synth_b_bprime"/>
    <property type="match status" value="1"/>
</dbReference>
<dbReference type="InterPro" id="IPR002146">
    <property type="entry name" value="ATP_synth_b/b'su_bac/chlpt"/>
</dbReference>
<dbReference type="InterPro" id="IPR050059">
    <property type="entry name" value="ATP_synthase_B_chain"/>
</dbReference>
<dbReference type="NCBIfam" id="NF006612">
    <property type="entry name" value="PRK09174.1"/>
    <property type="match status" value="1"/>
</dbReference>
<dbReference type="PANTHER" id="PTHR33445:SF1">
    <property type="entry name" value="ATP SYNTHASE SUBUNIT B"/>
    <property type="match status" value="1"/>
</dbReference>
<dbReference type="PANTHER" id="PTHR33445">
    <property type="entry name" value="ATP SYNTHASE SUBUNIT B', CHLOROPLASTIC"/>
    <property type="match status" value="1"/>
</dbReference>
<dbReference type="Pfam" id="PF00430">
    <property type="entry name" value="ATP-synt_B"/>
    <property type="match status" value="1"/>
</dbReference>
<organism>
    <name type="scientific">Bartonella tribocorum (strain CIP 105476 / IBS 506)</name>
    <dbReference type="NCBI Taxonomy" id="382640"/>
    <lineage>
        <taxon>Bacteria</taxon>
        <taxon>Pseudomonadati</taxon>
        <taxon>Pseudomonadota</taxon>
        <taxon>Alphaproteobacteria</taxon>
        <taxon>Hyphomicrobiales</taxon>
        <taxon>Bartonellaceae</taxon>
        <taxon>Bartonella</taxon>
    </lineage>
</organism>
<name>ATPF1_BART1</name>
<proteinExistence type="inferred from homology"/>